<protein>
    <recommendedName>
        <fullName evidence="1">UPF0246 protein Pmen_1032</fullName>
    </recommendedName>
</protein>
<accession>A4XR34</accession>
<sequence>MLMVISPAKTLDYETPPATPRFTQPEHLDHAQELIAQLRDFSPAQIAELMHLSDKLAGLNAARFGSWERPFNPSNAKQALLAFKGDVYTGLHAEDFSEDDFDFAQAHLRMLSGLYGVLRPLDLMQPYRLEMGTKLVNGRGKDLYAFWGERISAWLNQALAAQGDDVLLNLASNEYFGAVKRKALNARIIDTEFKDLKNGQYKIISFYAKKARGLMARYVIKERLTNPEGLKDFNYQGYRYSAEHSKADSLVFLRDQPLD</sequence>
<comment type="similarity">
    <text evidence="1">Belongs to the UPF0246 family.</text>
</comment>
<evidence type="ECO:0000255" key="1">
    <source>
        <dbReference type="HAMAP-Rule" id="MF_00652"/>
    </source>
</evidence>
<reference key="1">
    <citation type="submission" date="2007-04" db="EMBL/GenBank/DDBJ databases">
        <title>Complete sequence of Pseudomonas mendocina ymp.</title>
        <authorList>
            <consortium name="US DOE Joint Genome Institute"/>
            <person name="Copeland A."/>
            <person name="Lucas S."/>
            <person name="Lapidus A."/>
            <person name="Barry K."/>
            <person name="Glavina del Rio T."/>
            <person name="Dalin E."/>
            <person name="Tice H."/>
            <person name="Pitluck S."/>
            <person name="Kiss H."/>
            <person name="Brettin T."/>
            <person name="Detter J.C."/>
            <person name="Bruce D."/>
            <person name="Han C."/>
            <person name="Schmutz J."/>
            <person name="Larimer F."/>
            <person name="Land M."/>
            <person name="Hauser L."/>
            <person name="Kyrpides N."/>
            <person name="Mikhailova N."/>
            <person name="Hersman L."/>
            <person name="Dubois J."/>
            <person name="Maurice P."/>
            <person name="Richardson P."/>
        </authorList>
    </citation>
    <scope>NUCLEOTIDE SEQUENCE [LARGE SCALE GENOMIC DNA]</scope>
    <source>
        <strain>ymp</strain>
    </source>
</reference>
<organism>
    <name type="scientific">Ectopseudomonas mendocina (strain ymp)</name>
    <name type="common">Pseudomonas mendocina</name>
    <dbReference type="NCBI Taxonomy" id="399739"/>
    <lineage>
        <taxon>Bacteria</taxon>
        <taxon>Pseudomonadati</taxon>
        <taxon>Pseudomonadota</taxon>
        <taxon>Gammaproteobacteria</taxon>
        <taxon>Pseudomonadales</taxon>
        <taxon>Pseudomonadaceae</taxon>
        <taxon>Ectopseudomonas</taxon>
    </lineage>
</organism>
<name>Y1032_ECTM1</name>
<proteinExistence type="inferred from homology"/>
<dbReference type="EMBL" id="CP000680">
    <property type="protein sequence ID" value="ABP83800.1"/>
    <property type="molecule type" value="Genomic_DNA"/>
</dbReference>
<dbReference type="SMR" id="A4XR34"/>
<dbReference type="STRING" id="399739.Pmen_1032"/>
<dbReference type="KEGG" id="pmy:Pmen_1032"/>
<dbReference type="PATRIC" id="fig|399739.8.peg.1041"/>
<dbReference type="eggNOG" id="COG3022">
    <property type="taxonomic scope" value="Bacteria"/>
</dbReference>
<dbReference type="HOGENOM" id="CLU_061989_0_0_6"/>
<dbReference type="OrthoDB" id="9777133at2"/>
<dbReference type="GO" id="GO:0005829">
    <property type="term" value="C:cytosol"/>
    <property type="evidence" value="ECO:0007669"/>
    <property type="project" value="TreeGrafter"/>
</dbReference>
<dbReference type="GO" id="GO:0033194">
    <property type="term" value="P:response to hydroperoxide"/>
    <property type="evidence" value="ECO:0007669"/>
    <property type="project" value="TreeGrafter"/>
</dbReference>
<dbReference type="HAMAP" id="MF_00652">
    <property type="entry name" value="UPF0246"/>
    <property type="match status" value="1"/>
</dbReference>
<dbReference type="InterPro" id="IPR005583">
    <property type="entry name" value="YaaA"/>
</dbReference>
<dbReference type="NCBIfam" id="NF002541">
    <property type="entry name" value="PRK02101.1-1"/>
    <property type="match status" value="1"/>
</dbReference>
<dbReference type="NCBIfam" id="NF002542">
    <property type="entry name" value="PRK02101.1-3"/>
    <property type="match status" value="1"/>
</dbReference>
<dbReference type="PANTHER" id="PTHR30283:SF4">
    <property type="entry name" value="PEROXIDE STRESS RESISTANCE PROTEIN YAAA"/>
    <property type="match status" value="1"/>
</dbReference>
<dbReference type="PANTHER" id="PTHR30283">
    <property type="entry name" value="PEROXIDE STRESS RESPONSE PROTEIN YAAA"/>
    <property type="match status" value="1"/>
</dbReference>
<dbReference type="Pfam" id="PF03883">
    <property type="entry name" value="H2O2_YaaD"/>
    <property type="match status" value="1"/>
</dbReference>
<gene>
    <name type="ordered locus">Pmen_1032</name>
</gene>
<feature type="chain" id="PRO_1000061624" description="UPF0246 protein Pmen_1032">
    <location>
        <begin position="1"/>
        <end position="259"/>
    </location>
</feature>